<feature type="peptide" id="PRO_0000043954" description="Gonadoliberin-3">
    <location>
        <begin position="1"/>
        <end position="10"/>
    </location>
</feature>
<feature type="modified residue" description="Pyrrolidone carboxylic acid" evidence="1">
    <location>
        <position position="1"/>
    </location>
</feature>
<feature type="modified residue" description="Glycine amide" evidence="1">
    <location>
        <position position="10"/>
    </location>
</feature>
<name>GON3_CLUPA</name>
<dbReference type="GO" id="GO:0005576">
    <property type="term" value="C:extracellular region"/>
    <property type="evidence" value="ECO:0007669"/>
    <property type="project" value="UniProtKB-SubCell"/>
</dbReference>
<dbReference type="GO" id="GO:0005179">
    <property type="term" value="F:hormone activity"/>
    <property type="evidence" value="ECO:0007669"/>
    <property type="project" value="UniProtKB-KW"/>
</dbReference>
<dbReference type="InterPro" id="IPR002012">
    <property type="entry name" value="GnRH"/>
</dbReference>
<dbReference type="Pfam" id="PF00446">
    <property type="entry name" value="GnRH"/>
    <property type="match status" value="1"/>
</dbReference>
<dbReference type="PROSITE" id="PS00473">
    <property type="entry name" value="GNRH"/>
    <property type="match status" value="1"/>
</dbReference>
<proteinExistence type="evidence at protein level"/>
<gene>
    <name type="primary">gnrh3</name>
</gene>
<keyword id="KW-0027">Amidation</keyword>
<keyword id="KW-0903">Direct protein sequencing</keyword>
<keyword id="KW-0372">Hormone</keyword>
<keyword id="KW-0873">Pyrrolidone carboxylic acid</keyword>
<keyword id="KW-0964">Secreted</keyword>
<evidence type="ECO:0000269" key="1">
    <source>
    </source>
</evidence>
<evidence type="ECO:0000305" key="2"/>
<comment type="function">
    <text evidence="1">Stimulates the secretion of gonadotropins; it stimulates the secretion of both luteinizing and follicle-stimulating hormones.</text>
</comment>
<comment type="subcellular location">
    <subcellularLocation>
        <location>Secreted</location>
    </subcellularLocation>
</comment>
<comment type="similarity">
    <text evidence="2">Belongs to the GnRH family.</text>
</comment>
<organism>
    <name type="scientific">Clupea pallasii</name>
    <name type="common">Pacific herring</name>
    <dbReference type="NCBI Taxonomy" id="30724"/>
    <lineage>
        <taxon>Eukaryota</taxon>
        <taxon>Metazoa</taxon>
        <taxon>Chordata</taxon>
        <taxon>Craniata</taxon>
        <taxon>Vertebrata</taxon>
        <taxon>Euteleostomi</taxon>
        <taxon>Actinopterygii</taxon>
        <taxon>Neopterygii</taxon>
        <taxon>Teleostei</taxon>
        <taxon>Clupei</taxon>
        <taxon>Clupeiformes</taxon>
        <taxon>Clupeoidei</taxon>
        <taxon>Clupeidae</taxon>
        <taxon>Clupea</taxon>
    </lineage>
</organism>
<accession>P69106</accession>
<accession>P20367</accession>
<accession>P81751</accession>
<sequence length="10" mass="1230">QHWSYGWLPG</sequence>
<protein>
    <recommendedName>
        <fullName>Gonadoliberin-3</fullName>
    </recommendedName>
    <alternativeName>
        <fullName>Gonadoliberin III</fullName>
    </alternativeName>
    <alternativeName>
        <fullName>Gonadotropin-releasing hormone III</fullName>
        <shortName>GnRH-III</shortName>
    </alternativeName>
    <alternativeName>
        <fullName>Luliberin III</fullName>
    </alternativeName>
    <alternativeName>
        <fullName>Luteinizing hormone-releasing hormone III</fullName>
        <shortName>LH-RH III</shortName>
    </alternativeName>
</protein>
<reference key="1">
    <citation type="journal article" date="2000" name="Endocrinology">
        <title>Primary structure and function of three gonadotropin-releasing hormones, including a novel form, from an ancient teleost, herring.</title>
        <authorList>
            <person name="Carolsfeld J."/>
            <person name="Powell J.F.F."/>
            <person name="Park M."/>
            <person name="Fischer W.H."/>
            <person name="Craig A.G."/>
            <person name="Chang J.P."/>
            <person name="Rivier J.E."/>
            <person name="Sherwood N.M."/>
        </authorList>
    </citation>
    <scope>PROTEIN SEQUENCE</scope>
    <scope>PYROGLUTAMATE FORMATION AT GLN-1</scope>
    <scope>AMIDATION AT GLY-10</scope>
    <scope>FUNCTION</scope>
    <source>
        <tissue>Brain</tissue>
        <tissue>Pituitary</tissue>
    </source>
</reference>